<name>SMC4_HUMAN</name>
<organism>
    <name type="scientific">Homo sapiens</name>
    <name type="common">Human</name>
    <dbReference type="NCBI Taxonomy" id="9606"/>
    <lineage>
        <taxon>Eukaryota</taxon>
        <taxon>Metazoa</taxon>
        <taxon>Chordata</taxon>
        <taxon>Craniata</taxon>
        <taxon>Vertebrata</taxon>
        <taxon>Euteleostomi</taxon>
        <taxon>Mammalia</taxon>
        <taxon>Eutheria</taxon>
        <taxon>Euarchontoglires</taxon>
        <taxon>Primates</taxon>
        <taxon>Haplorrhini</taxon>
        <taxon>Catarrhini</taxon>
        <taxon>Hominidae</taxon>
        <taxon>Homo</taxon>
    </lineage>
</organism>
<gene>
    <name type="primary">SMC4</name>
    <name type="synonym">CAPC</name>
    <name type="synonym">SMC4L1</name>
</gene>
<proteinExistence type="evidence at protein level"/>
<reference key="1">
    <citation type="journal article" date="1999" name="J. Hum. Genet.">
        <title>Isolation and characterization of a human cDNA homologous to the Xenopus laevis XCAP-C gene belonging to the structural maintenance of chromosomes (SMC) family.</title>
        <authorList>
            <person name="Nishiwaki T."/>
            <person name="Daigo Y."/>
            <person name="Kawasoe T."/>
            <person name="Nagasawa Y."/>
            <person name="Ishiguro H."/>
            <person name="Fujita M."/>
            <person name="Furukawa Y."/>
            <person name="Nakamura Y."/>
        </authorList>
    </citation>
    <scope>NUCLEOTIDE SEQUENCE [MRNA] (ISOFORM 1)</scope>
    <scope>TISSUE SPECIFICITY</scope>
</reference>
<reference key="2">
    <citation type="journal article" date="2001" name="Genome Res.">
        <title>Towards a catalog of human genes and proteins: sequencing and analysis of 500 novel complete protein coding human cDNAs.</title>
        <authorList>
            <person name="Wiemann S."/>
            <person name="Weil B."/>
            <person name="Wellenreuther R."/>
            <person name="Gassenhuber J."/>
            <person name="Glassl S."/>
            <person name="Ansorge W."/>
            <person name="Boecher M."/>
            <person name="Bloecker H."/>
            <person name="Bauersachs S."/>
            <person name="Blum H."/>
            <person name="Lauber J."/>
            <person name="Duesterhoeft A."/>
            <person name="Beyer A."/>
            <person name="Koehrer K."/>
            <person name="Strack N."/>
            <person name="Mewes H.-W."/>
            <person name="Ottenwaelder B."/>
            <person name="Obermaier B."/>
            <person name="Tampe J."/>
            <person name="Heubner D."/>
            <person name="Wambutt R."/>
            <person name="Korn B."/>
            <person name="Klein M."/>
            <person name="Poustka A."/>
        </authorList>
    </citation>
    <scope>NUCLEOTIDE SEQUENCE [LARGE SCALE MRNA] (ISOFORM 1)</scope>
    <source>
        <tissue>Testis</tissue>
    </source>
</reference>
<reference key="3">
    <citation type="journal article" date="2007" name="BMC Genomics">
        <title>The full-ORF clone resource of the German cDNA consortium.</title>
        <authorList>
            <person name="Bechtel S."/>
            <person name="Rosenfelder H."/>
            <person name="Duda A."/>
            <person name="Schmidt C.P."/>
            <person name="Ernst U."/>
            <person name="Wellenreuther R."/>
            <person name="Mehrle A."/>
            <person name="Schuster C."/>
            <person name="Bahr A."/>
            <person name="Bloecker H."/>
            <person name="Heubner D."/>
            <person name="Hoerlein A."/>
            <person name="Michel G."/>
            <person name="Wedler H."/>
            <person name="Koehrer K."/>
            <person name="Ottenwaelder B."/>
            <person name="Poustka A."/>
            <person name="Wiemann S."/>
            <person name="Schupp I."/>
        </authorList>
    </citation>
    <scope>NUCLEOTIDE SEQUENCE [LARGE SCALE MRNA] (ISOFORM 2)</scope>
    <source>
        <tissue>Testis</tissue>
    </source>
</reference>
<reference key="4">
    <citation type="journal article" date="2006" name="Nature">
        <title>The DNA sequence, annotation and analysis of human chromosome 3.</title>
        <authorList>
            <person name="Muzny D.M."/>
            <person name="Scherer S.E."/>
            <person name="Kaul R."/>
            <person name="Wang J."/>
            <person name="Yu J."/>
            <person name="Sudbrak R."/>
            <person name="Buhay C.J."/>
            <person name="Chen R."/>
            <person name="Cree A."/>
            <person name="Ding Y."/>
            <person name="Dugan-Rocha S."/>
            <person name="Gill R."/>
            <person name="Gunaratne P."/>
            <person name="Harris R.A."/>
            <person name="Hawes A.C."/>
            <person name="Hernandez J."/>
            <person name="Hodgson A.V."/>
            <person name="Hume J."/>
            <person name="Jackson A."/>
            <person name="Khan Z.M."/>
            <person name="Kovar-Smith C."/>
            <person name="Lewis L.R."/>
            <person name="Lozado R.J."/>
            <person name="Metzker M.L."/>
            <person name="Milosavljevic A."/>
            <person name="Miner G.R."/>
            <person name="Morgan M.B."/>
            <person name="Nazareth L.V."/>
            <person name="Scott G."/>
            <person name="Sodergren E."/>
            <person name="Song X.-Z."/>
            <person name="Steffen D."/>
            <person name="Wei S."/>
            <person name="Wheeler D.A."/>
            <person name="Wright M.W."/>
            <person name="Worley K.C."/>
            <person name="Yuan Y."/>
            <person name="Zhang Z."/>
            <person name="Adams C.Q."/>
            <person name="Ansari-Lari M.A."/>
            <person name="Ayele M."/>
            <person name="Brown M.J."/>
            <person name="Chen G."/>
            <person name="Chen Z."/>
            <person name="Clendenning J."/>
            <person name="Clerc-Blankenburg K.P."/>
            <person name="Chen R."/>
            <person name="Chen Z."/>
            <person name="Davis C."/>
            <person name="Delgado O."/>
            <person name="Dinh H.H."/>
            <person name="Dong W."/>
            <person name="Draper H."/>
            <person name="Ernst S."/>
            <person name="Fu G."/>
            <person name="Gonzalez-Garay M.L."/>
            <person name="Garcia D.K."/>
            <person name="Gillett W."/>
            <person name="Gu J."/>
            <person name="Hao B."/>
            <person name="Haugen E."/>
            <person name="Havlak P."/>
            <person name="He X."/>
            <person name="Hennig S."/>
            <person name="Hu S."/>
            <person name="Huang W."/>
            <person name="Jackson L.R."/>
            <person name="Jacob L.S."/>
            <person name="Kelly S.H."/>
            <person name="Kube M."/>
            <person name="Levy R."/>
            <person name="Li Z."/>
            <person name="Liu B."/>
            <person name="Liu J."/>
            <person name="Liu W."/>
            <person name="Lu J."/>
            <person name="Maheshwari M."/>
            <person name="Nguyen B.-V."/>
            <person name="Okwuonu G.O."/>
            <person name="Palmeiri A."/>
            <person name="Pasternak S."/>
            <person name="Perez L.M."/>
            <person name="Phelps K.A."/>
            <person name="Plopper F.J."/>
            <person name="Qiang B."/>
            <person name="Raymond C."/>
            <person name="Rodriguez R."/>
            <person name="Saenphimmachak C."/>
            <person name="Santibanez J."/>
            <person name="Shen H."/>
            <person name="Shen Y."/>
            <person name="Subramanian S."/>
            <person name="Tabor P.E."/>
            <person name="Verduzco D."/>
            <person name="Waldron L."/>
            <person name="Wang J."/>
            <person name="Wang J."/>
            <person name="Wang Q."/>
            <person name="Williams G.A."/>
            <person name="Wong G.K.-S."/>
            <person name="Yao Z."/>
            <person name="Zhang J."/>
            <person name="Zhang X."/>
            <person name="Zhao G."/>
            <person name="Zhou J."/>
            <person name="Zhou Y."/>
            <person name="Nelson D."/>
            <person name="Lehrach H."/>
            <person name="Reinhardt R."/>
            <person name="Naylor S.L."/>
            <person name="Yang H."/>
            <person name="Olson M."/>
            <person name="Weinstock G."/>
            <person name="Gibbs R.A."/>
        </authorList>
    </citation>
    <scope>NUCLEOTIDE SEQUENCE [LARGE SCALE GENOMIC DNA]</scope>
</reference>
<reference key="5">
    <citation type="submission" date="2005-09" db="EMBL/GenBank/DDBJ databases">
        <authorList>
            <person name="Mural R.J."/>
            <person name="Istrail S."/>
            <person name="Sutton G.G."/>
            <person name="Florea L."/>
            <person name="Halpern A.L."/>
            <person name="Mobarry C.M."/>
            <person name="Lippert R."/>
            <person name="Walenz B."/>
            <person name="Shatkay H."/>
            <person name="Dew I."/>
            <person name="Miller J.R."/>
            <person name="Flanigan M.J."/>
            <person name="Edwards N.J."/>
            <person name="Bolanos R."/>
            <person name="Fasulo D."/>
            <person name="Halldorsson B.V."/>
            <person name="Hannenhalli S."/>
            <person name="Turner R."/>
            <person name="Yooseph S."/>
            <person name="Lu F."/>
            <person name="Nusskern D.R."/>
            <person name="Shue B.C."/>
            <person name="Zheng X.H."/>
            <person name="Zhong F."/>
            <person name="Delcher A.L."/>
            <person name="Huson D.H."/>
            <person name="Kravitz S.A."/>
            <person name="Mouchard L."/>
            <person name="Reinert K."/>
            <person name="Remington K.A."/>
            <person name="Clark A.G."/>
            <person name="Waterman M.S."/>
            <person name="Eichler E.E."/>
            <person name="Adams M.D."/>
            <person name="Hunkapiller M.W."/>
            <person name="Myers E.W."/>
            <person name="Venter J.C."/>
        </authorList>
    </citation>
    <scope>NUCLEOTIDE SEQUENCE [LARGE SCALE GENOMIC DNA]</scope>
</reference>
<reference key="6">
    <citation type="journal article" date="1998" name="Proc. Natl. Acad. Sci. U.S.A.">
        <title>Identification of two distinct human SMC protein complexes involved in mitotic chromosome dynamics.</title>
        <authorList>
            <person name="Schmiesing J.A."/>
            <person name="Ball A.R. Jr."/>
            <person name="Gregson H.C."/>
            <person name="Alderton J.M."/>
            <person name="Zhou S."/>
            <person name="Yokomori K."/>
        </authorList>
    </citation>
    <scope>NUCLEOTIDE SEQUENCE [MRNA] OF 87-1288 (ISOFORM 1)</scope>
    <scope>INTERACTION WITH SMC2</scope>
    <source>
        <tissue>Teratocarcinoma</tissue>
    </source>
</reference>
<reference key="7">
    <citation type="journal article" date="2000" name="Mol. Cell. Biol.">
        <title>A human condensin complex containing hCAP-C-hCAP-E and CNAP1, a homolog of Xenopus XCAP-D2, colocalizes with phosphorylated histone H3 during the early stage of mitotic chromosome condensation.</title>
        <authorList>
            <person name="Schmiesing J.A."/>
            <person name="Gregson H.C."/>
            <person name="Zhou S."/>
            <person name="Yokomori K."/>
        </authorList>
    </citation>
    <scope>IDENTIFICATION IN A CONDENSIN COMPLEX WITH SMC2 AND CNAP1</scope>
    <scope>SUBCELLULAR LOCATION</scope>
</reference>
<reference key="8">
    <citation type="journal article" date="2001" name="J. Biol. Chem.">
        <title>Chromosome condensation by a human condensin complex in Xenopus egg extracts.</title>
        <authorList>
            <person name="Kimura K."/>
            <person name="Cuvier O."/>
            <person name="Hirano T."/>
        </authorList>
    </citation>
    <scope>IDENTIFICATION IN A CONDENSIN COMPLEX WITH SMC2; BRRN1; CNAP1 AND CAPG</scope>
    <scope>FUNCTION OF THE COMPLEX</scope>
</reference>
<reference key="9">
    <citation type="journal article" date="2006" name="Cell">
        <title>Global, in vivo, and site-specific phosphorylation dynamics in signaling networks.</title>
        <authorList>
            <person name="Olsen J.V."/>
            <person name="Blagoev B."/>
            <person name="Gnad F."/>
            <person name="Macek B."/>
            <person name="Kumar C."/>
            <person name="Mortensen P."/>
            <person name="Mann M."/>
        </authorList>
    </citation>
    <scope>IDENTIFICATION BY MASS SPECTROMETRY [LARGE SCALE ANALYSIS]</scope>
    <source>
        <tissue>Cervix carcinoma</tissue>
    </source>
</reference>
<reference key="10">
    <citation type="journal article" date="2006" name="Nat. Biotechnol.">
        <title>A probability-based approach for high-throughput protein phosphorylation analysis and site localization.</title>
        <authorList>
            <person name="Beausoleil S.A."/>
            <person name="Villen J."/>
            <person name="Gerber S.A."/>
            <person name="Rush J."/>
            <person name="Gygi S.P."/>
        </authorList>
    </citation>
    <scope>IDENTIFICATION BY MASS SPECTROMETRY [LARGE SCALE ANALYSIS]</scope>
    <source>
        <tissue>Cervix carcinoma</tissue>
    </source>
</reference>
<reference key="11">
    <citation type="journal article" date="2008" name="Mol. Cell">
        <title>Kinase-selective enrichment enables quantitative phosphoproteomics of the kinome across the cell cycle.</title>
        <authorList>
            <person name="Daub H."/>
            <person name="Olsen J.V."/>
            <person name="Bairlein M."/>
            <person name="Gnad F."/>
            <person name="Oppermann F.S."/>
            <person name="Korner R."/>
            <person name="Greff Z."/>
            <person name="Keri G."/>
            <person name="Stemmann O."/>
            <person name="Mann M."/>
        </authorList>
    </citation>
    <scope>IDENTIFICATION BY MASS SPECTROMETRY [LARGE SCALE ANALYSIS]</scope>
    <source>
        <tissue>Cervix carcinoma</tissue>
    </source>
</reference>
<reference key="12">
    <citation type="journal article" date="2008" name="Proc. Natl. Acad. Sci. U.S.A.">
        <title>A quantitative atlas of mitotic phosphorylation.</title>
        <authorList>
            <person name="Dephoure N."/>
            <person name="Zhou C."/>
            <person name="Villen J."/>
            <person name="Beausoleil S.A."/>
            <person name="Bakalarski C.E."/>
            <person name="Elledge S.J."/>
            <person name="Gygi S.P."/>
        </authorList>
    </citation>
    <scope>PHOSPHORYLATION [LARGE SCALE ANALYSIS] AT SER-22</scope>
    <scope>IDENTIFICATION BY MASS SPECTROMETRY [LARGE SCALE ANALYSIS]</scope>
    <source>
        <tissue>Cervix carcinoma</tissue>
    </source>
</reference>
<reference key="13">
    <citation type="journal article" date="2009" name="Anal. Chem.">
        <title>Lys-N and trypsin cover complementary parts of the phosphoproteome in a refined SCX-based approach.</title>
        <authorList>
            <person name="Gauci S."/>
            <person name="Helbig A.O."/>
            <person name="Slijper M."/>
            <person name="Krijgsveld J."/>
            <person name="Heck A.J."/>
            <person name="Mohammed S."/>
        </authorList>
    </citation>
    <scope>IDENTIFICATION BY MASS SPECTROMETRY [LARGE SCALE ANALYSIS]</scope>
</reference>
<reference key="14">
    <citation type="journal article" date="2009" name="Mol. Cell. Proteomics">
        <title>Large-scale proteomics analysis of the human kinome.</title>
        <authorList>
            <person name="Oppermann F.S."/>
            <person name="Gnad F."/>
            <person name="Olsen J.V."/>
            <person name="Hornberger R."/>
            <person name="Greff Z."/>
            <person name="Keri G."/>
            <person name="Mann M."/>
            <person name="Daub H."/>
        </authorList>
    </citation>
    <scope>IDENTIFICATION BY MASS SPECTROMETRY [LARGE SCALE ANALYSIS]</scope>
</reference>
<reference key="15">
    <citation type="journal article" date="2009" name="Sci. Signal.">
        <title>Quantitative phosphoproteomic analysis of T cell receptor signaling reveals system-wide modulation of protein-protein interactions.</title>
        <authorList>
            <person name="Mayya V."/>
            <person name="Lundgren D.H."/>
            <person name="Hwang S.-I."/>
            <person name="Rezaul K."/>
            <person name="Wu L."/>
            <person name="Eng J.K."/>
            <person name="Rodionov V."/>
            <person name="Han D.K."/>
        </authorList>
    </citation>
    <scope>PHOSPHORYLATION [LARGE SCALE ANALYSIS] AT SER-22; SER-28; THR-39; SER-41 AND SER-50</scope>
    <scope>IDENTIFICATION BY MASS SPECTROMETRY [LARGE SCALE ANALYSIS]</scope>
    <source>
        <tissue>Leukemic T-cell</tissue>
    </source>
</reference>
<reference key="16">
    <citation type="journal article" date="2009" name="Science">
        <title>Lysine acetylation targets protein complexes and co-regulates major cellular functions.</title>
        <authorList>
            <person name="Choudhary C."/>
            <person name="Kumar C."/>
            <person name="Gnad F."/>
            <person name="Nielsen M.L."/>
            <person name="Rehman M."/>
            <person name="Walther T.C."/>
            <person name="Olsen J.V."/>
            <person name="Mann M."/>
        </authorList>
    </citation>
    <scope>ACETYLATION [LARGE SCALE ANALYSIS] AT LYS-679</scope>
    <scope>IDENTIFICATION BY MASS SPECTROMETRY [LARGE SCALE ANALYSIS]</scope>
</reference>
<reference key="17">
    <citation type="journal article" date="2010" name="Sci. Signal.">
        <title>Quantitative phosphoproteomics reveals widespread full phosphorylation site occupancy during mitosis.</title>
        <authorList>
            <person name="Olsen J.V."/>
            <person name="Vermeulen M."/>
            <person name="Santamaria A."/>
            <person name="Kumar C."/>
            <person name="Miller M.L."/>
            <person name="Jensen L.J."/>
            <person name="Gnad F."/>
            <person name="Cox J."/>
            <person name="Jensen T.S."/>
            <person name="Nigg E.A."/>
            <person name="Brunak S."/>
            <person name="Mann M."/>
        </authorList>
    </citation>
    <scope>PHOSPHORYLATION [LARGE SCALE ANALYSIS] AT SER-22; SER-41; SER-143 AND SER-1056</scope>
    <scope>IDENTIFICATION BY MASS SPECTROMETRY [LARGE SCALE ANALYSIS]</scope>
    <source>
        <tissue>Cervix carcinoma</tissue>
    </source>
</reference>
<reference key="18">
    <citation type="journal article" date="2011" name="BMC Syst. Biol.">
        <title>Initial characterization of the human central proteome.</title>
        <authorList>
            <person name="Burkard T.R."/>
            <person name="Planyavsky M."/>
            <person name="Kaupe I."/>
            <person name="Breitwieser F.P."/>
            <person name="Buerckstuemmer T."/>
            <person name="Bennett K.L."/>
            <person name="Superti-Furga G."/>
            <person name="Colinge J."/>
        </authorList>
    </citation>
    <scope>IDENTIFICATION BY MASS SPECTROMETRY [LARGE SCALE ANALYSIS]</scope>
</reference>
<reference key="19">
    <citation type="journal article" date="2011" name="Sci. Signal.">
        <title>System-wide temporal characterization of the proteome and phosphoproteome of human embryonic stem cell differentiation.</title>
        <authorList>
            <person name="Rigbolt K.T."/>
            <person name="Prokhorova T.A."/>
            <person name="Akimov V."/>
            <person name="Henningsen J."/>
            <person name="Johansen P.T."/>
            <person name="Kratchmarova I."/>
            <person name="Kassem M."/>
            <person name="Mann M."/>
            <person name="Olsen J.V."/>
            <person name="Blagoev B."/>
        </authorList>
    </citation>
    <scope>IDENTIFICATION BY MASS SPECTROMETRY [LARGE SCALE ANALYSIS]</scope>
</reference>
<reference key="20">
    <citation type="journal article" date="2013" name="J. Proteome Res.">
        <title>Toward a comprehensive characterization of a human cancer cell phosphoproteome.</title>
        <authorList>
            <person name="Zhou H."/>
            <person name="Di Palma S."/>
            <person name="Preisinger C."/>
            <person name="Peng M."/>
            <person name="Polat A.N."/>
            <person name="Heck A.J."/>
            <person name="Mohammed S."/>
        </authorList>
    </citation>
    <scope>PHOSPHORYLATION [LARGE SCALE ANALYSIS] AT SER-22; SER-28; THR-39; SER-41; SER-50; SER-143 AND SER-982</scope>
    <scope>IDENTIFICATION BY MASS SPECTROMETRY [LARGE SCALE ANALYSIS]</scope>
    <source>
        <tissue>Cervix carcinoma</tissue>
        <tissue>Erythroleukemia</tissue>
    </source>
</reference>
<keyword id="KW-0002">3D-structure</keyword>
<keyword id="KW-0007">Acetylation</keyword>
<keyword id="KW-0025">Alternative splicing</keyword>
<keyword id="KW-0067">ATP-binding</keyword>
<keyword id="KW-0131">Cell cycle</keyword>
<keyword id="KW-0132">Cell division</keyword>
<keyword id="KW-0158">Chromosome</keyword>
<keyword id="KW-0175">Coiled coil</keyword>
<keyword id="KW-0963">Cytoplasm</keyword>
<keyword id="KW-0226">DNA condensation</keyword>
<keyword id="KW-0498">Mitosis</keyword>
<keyword id="KW-0547">Nucleotide-binding</keyword>
<keyword id="KW-0539">Nucleus</keyword>
<keyword id="KW-0597">Phosphoprotein</keyword>
<keyword id="KW-1267">Proteomics identification</keyword>
<keyword id="KW-1185">Reference proteome</keyword>
<sequence>MPRKGTQPSTARRREEGPPPPSPDGASSDAEPEPPSGRTESPATAAETASEELDNRSLEEILNSIPPPPPPAMTNEAGAPRLMITHIVNQNFKSYAGEKILGPFHKRFSCIIGPNGSGKSNVIDSMLFVFGYRAQKIRSKKLSVLIHNSDEHKDIQSCTVEVHFQKIIDKEGDDYEVIPNSNFYVSRTACRDNTSVYHISGKKKTFKDVGNLLRSHGIDLDHNRFLILQGEVEQIAMMKPKGQTEHDEGMLEYLEDIIGCGRLNEPIKVLCRRVEILNEHRGEKLNRVKMVEKEKDALEGEKNIAIEFLTLENEIFRKKNHVCQYYIYELQKRIAEMETQKEKIHEDTKEINEKSNILSNEMKAKNKDVKDTEKKLNKITKFIEENKEKFTQLDLEDVQVREKLKHATSKAKKLEKQLQKDKEKVEEFKSIPAKSNNIINETTTRNNALEKEKEKEEKKLKEVMDSLKQETQGLQKEKESREKELMGFSKSVNEARSKMDVAQSELDIYLSRHNTAVSQLTKAKEALIAASETLKERKAAIRDIEGKLPQTEQELKEKEKELQKLTQEETNFKSLVHDLFQKVEEAKSSLAMNRSRGKVLDAIIQEKKSGRIPGIYGRLGDLGAIDEKYDVAISSCCHALDYIVVDSIDIAQECVNFLKRQNIGVATFIGLDKMAVWAKKMTEIQTPENTPRLFDLVKVKDEKIRQAFYFALRDTLVADNLDQATRVAYQKDRRWRVVTLQGQIIEQSGTMTGGGSKVMKGRMGSSLVIEISEEEVNKMESQLQNDSKKAMQIQEQKVQLEERVVKLRHSEREMRNTLEKFTASIQRLIEQEEYLNVQVKELEANVLATAPDKKKQKLLEENVSAFKTEYDAVAEKAGKVEAEVKRLHNTIVEINNHKLKAQQDKLDKINKQLDECASAITKAQVAIKTADRNLQKAQDSVLRTEKEIKDTEKEVDDLTAELKSLEDKAAEVVKNTNAAEESLPEIQKEHRNLLQELKVIQENEHALQKDALSIKLKLEQIDGHIAEHNSKIKYWHKEISKISLHPIEDNPIEEISVLSPEDLEAIKNPDSITNQIALLEARCHEMKPNLGAIAEYKKKEELYLQRVAELDKITYERDSFRQAYEDLRKQRLNEFMAGFYIITNKLKENYQMLTLGGDAELELVDSLDPFSEGIMFSVRPPKKSWKKIFNLSGGEKTLSSLALVFALHHYKPTPLYFMDEIDAALDFKNVSIVAFYIYEQTKNAQFIIISLRNNMFEISDRLIGIYKTYNITKSVAVNPKEIASKGLC</sequence>
<feature type="chain" id="PRO_0000119006" description="Structural maintenance of chromosomes protein 4">
    <location>
        <begin position="1"/>
        <end position="1288"/>
    </location>
</feature>
<feature type="domain" description="SMC hinge">
    <location>
        <begin position="613"/>
        <end position="727"/>
    </location>
</feature>
<feature type="region of interest" description="Disordered" evidence="4">
    <location>
        <begin position="1"/>
        <end position="55"/>
    </location>
</feature>
<feature type="coiled-coil region" evidence="3">
    <location>
        <begin position="272"/>
        <end position="588"/>
    </location>
</feature>
<feature type="coiled-coil region" evidence="3">
    <location>
        <begin position="767"/>
        <end position="1020"/>
    </location>
</feature>
<feature type="coiled-coil region" evidence="3">
    <location>
        <begin position="1109"/>
        <end position="1129"/>
    </location>
</feature>
<feature type="compositionally biased region" description="Polar residues" evidence="4">
    <location>
        <begin position="1"/>
        <end position="10"/>
    </location>
</feature>
<feature type="compositionally biased region" description="Low complexity" evidence="4">
    <location>
        <begin position="39"/>
        <end position="48"/>
    </location>
</feature>
<feature type="binding site" evidence="3">
    <location>
        <begin position="113"/>
        <end position="120"/>
    </location>
    <ligand>
        <name>ATP</name>
        <dbReference type="ChEBI" id="CHEBI:30616"/>
    </ligand>
</feature>
<feature type="modified residue" description="Phosphoserine" evidence="10 12 13 14">
    <location>
        <position position="22"/>
    </location>
</feature>
<feature type="modified residue" description="Phosphoserine" evidence="12 14">
    <location>
        <position position="28"/>
    </location>
</feature>
<feature type="modified residue" description="Phosphothreonine" evidence="12 14">
    <location>
        <position position="39"/>
    </location>
</feature>
<feature type="modified residue" description="Phosphoserine" evidence="12 13 14">
    <location>
        <position position="41"/>
    </location>
</feature>
<feature type="modified residue" description="Phosphoserine" evidence="12 14">
    <location>
        <position position="50"/>
    </location>
</feature>
<feature type="modified residue" description="Phosphoserine" evidence="13 14">
    <location>
        <position position="143"/>
    </location>
</feature>
<feature type="modified residue" description="N6-acetyllysine" evidence="2">
    <location>
        <position position="381"/>
    </location>
</feature>
<feature type="modified residue" description="N6-acetyllysine" evidence="11">
    <location>
        <position position="679"/>
    </location>
</feature>
<feature type="modified residue" description="Phosphoserine" evidence="14">
    <location>
        <position position="982"/>
    </location>
</feature>
<feature type="modified residue" description="Phosphoserine" evidence="13">
    <location>
        <position position="1056"/>
    </location>
</feature>
<feature type="splice variant" id="VSP_007245" description="In isoform 2." evidence="8">
    <location>
        <begin position="980"/>
        <end position="1037"/>
    </location>
</feature>
<feature type="sequence variant" id="VAR_052439" description="In dbSNP:rs35214835.">
    <original>S</original>
    <variation>R</variation>
    <location>
        <position position="181"/>
    </location>
</feature>
<feature type="sequence variant" id="VAR_052440" description="In dbSNP:rs33999879.">
    <original>N</original>
    <variation>S</variation>
    <location>
        <position position="356"/>
    </location>
</feature>
<feature type="sequence variant" id="VAR_059843" description="In dbSNP:rs2164675.">
    <original>E</original>
    <variation>D</variation>
    <location>
        <position position="415"/>
    </location>
</feature>
<feature type="sequence conflict" description="In Ref. 6; AAC72361." evidence="9" ref="6">
    <original>R</original>
    <variation>Q</variation>
    <location>
        <position position="272"/>
    </location>
</feature>
<feature type="sequence conflict" description="In Ref. 2; CAB66811." evidence="9" ref="2">
    <original>E</original>
    <variation>D</variation>
    <location>
        <position position="283"/>
    </location>
</feature>
<feature type="sequence conflict" description="In Ref. 6; AAC72361." evidence="9" ref="6">
    <original>QL</original>
    <variation>HV</variation>
    <location>
        <begin position="392"/>
        <end position="393"/>
    </location>
</feature>
<feature type="sequence conflict" description="In Ref. 6; AAC72361." evidence="9" ref="6">
    <original>R</original>
    <variation>S</variation>
    <location>
        <position position="594"/>
    </location>
</feature>
<feature type="sequence conflict" description="In Ref. 3; CAD38803." evidence="9" ref="3">
    <original>V</original>
    <variation>G</variation>
    <location>
        <position position="645"/>
    </location>
</feature>
<feature type="helix" evidence="15">
    <location>
        <begin position="573"/>
        <end position="608"/>
    </location>
</feature>
<feature type="strand" evidence="15">
    <location>
        <begin position="614"/>
        <end position="618"/>
    </location>
</feature>
<feature type="helix" evidence="15">
    <location>
        <begin position="619"/>
        <end position="622"/>
    </location>
</feature>
<feature type="helix" evidence="15">
    <location>
        <begin position="627"/>
        <end position="629"/>
    </location>
</feature>
<feature type="helix" evidence="15">
    <location>
        <begin position="630"/>
        <end position="636"/>
    </location>
</feature>
<feature type="helix" evidence="15">
    <location>
        <begin position="638"/>
        <end position="641"/>
    </location>
</feature>
<feature type="strand" evidence="15">
    <location>
        <begin position="642"/>
        <end position="646"/>
    </location>
</feature>
<feature type="helix" evidence="15">
    <location>
        <begin position="648"/>
        <end position="660"/>
    </location>
</feature>
<feature type="strand" evidence="15">
    <location>
        <begin position="665"/>
        <end position="670"/>
    </location>
</feature>
<feature type="helix" evidence="15">
    <location>
        <begin position="671"/>
        <end position="677"/>
    </location>
</feature>
<feature type="helix" evidence="15">
    <location>
        <begin position="687"/>
        <end position="689"/>
    </location>
</feature>
<feature type="helix" evidence="15">
    <location>
        <begin position="693"/>
        <end position="696"/>
    </location>
</feature>
<feature type="helix" evidence="15">
    <location>
        <begin position="702"/>
        <end position="712"/>
    </location>
</feature>
<feature type="strand" evidence="15">
    <location>
        <begin position="716"/>
        <end position="720"/>
    </location>
</feature>
<feature type="helix" evidence="15">
    <location>
        <begin position="721"/>
        <end position="729"/>
    </location>
</feature>
<feature type="strand" evidence="15">
    <location>
        <begin position="730"/>
        <end position="733"/>
    </location>
</feature>
<feature type="strand" evidence="15">
    <location>
        <begin position="737"/>
        <end position="739"/>
    </location>
</feature>
<feature type="strand" evidence="15">
    <location>
        <begin position="751"/>
        <end position="753"/>
    </location>
</feature>
<feature type="strand" evidence="15">
    <location>
        <begin position="763"/>
        <end position="765"/>
    </location>
</feature>
<protein>
    <recommendedName>
        <fullName>Structural maintenance of chromosomes protein 4</fullName>
        <shortName>SMC protein 4</shortName>
        <shortName>SMC-4</shortName>
    </recommendedName>
    <alternativeName>
        <fullName>Chromosome-associated polypeptide C</fullName>
        <shortName>hCAP-C</shortName>
    </alternativeName>
    <alternativeName>
        <fullName>XCAP-C homolog</fullName>
    </alternativeName>
</protein>
<dbReference type="EMBL" id="AB019987">
    <property type="protein sequence ID" value="BAA73535.1"/>
    <property type="molecule type" value="mRNA"/>
</dbReference>
<dbReference type="EMBL" id="AL136877">
    <property type="protein sequence ID" value="CAB66811.1"/>
    <property type="molecule type" value="mRNA"/>
</dbReference>
<dbReference type="EMBL" id="AL833949">
    <property type="protein sequence ID" value="CAD38803.1"/>
    <property type="molecule type" value="mRNA"/>
</dbReference>
<dbReference type="EMBL" id="AC024221">
    <property type="status" value="NOT_ANNOTATED_CDS"/>
    <property type="molecule type" value="Genomic_DNA"/>
</dbReference>
<dbReference type="EMBL" id="CH471052">
    <property type="protein sequence ID" value="EAW78639.1"/>
    <property type="molecule type" value="Genomic_DNA"/>
</dbReference>
<dbReference type="EMBL" id="CH471052">
    <property type="protein sequence ID" value="EAW78640.1"/>
    <property type="molecule type" value="Genomic_DNA"/>
</dbReference>
<dbReference type="EMBL" id="AF092564">
    <property type="protein sequence ID" value="AAC72361.1"/>
    <property type="molecule type" value="mRNA"/>
</dbReference>
<dbReference type="CCDS" id="CCDS3189.1">
    <molecule id="Q9NTJ3-1"/>
</dbReference>
<dbReference type="PIR" id="T46486">
    <property type="entry name" value="T46486"/>
</dbReference>
<dbReference type="RefSeq" id="NP_001002800.1">
    <molecule id="Q9NTJ3-1"/>
    <property type="nucleotide sequence ID" value="NM_001002800.3"/>
</dbReference>
<dbReference type="RefSeq" id="NP_001275682.1">
    <property type="nucleotide sequence ID" value="NM_001288753.1"/>
</dbReference>
<dbReference type="RefSeq" id="NP_005487.3">
    <molecule id="Q9NTJ3-1"/>
    <property type="nucleotide sequence ID" value="NM_005496.3"/>
</dbReference>
<dbReference type="RefSeq" id="XP_011510613.1">
    <molecule id="Q9NTJ3-1"/>
    <property type="nucleotide sequence ID" value="XM_011512311.3"/>
</dbReference>
<dbReference type="RefSeq" id="XP_054200798.1">
    <molecule id="Q9NTJ3-1"/>
    <property type="nucleotide sequence ID" value="XM_054344823.1"/>
</dbReference>
<dbReference type="PDB" id="4U4P">
    <property type="method" value="X-ray"/>
    <property type="resolution" value="1.89 A"/>
    <property type="chains" value="B=566-809"/>
</dbReference>
<dbReference type="PDBsum" id="4U4P"/>
<dbReference type="SMR" id="Q9NTJ3"/>
<dbReference type="BioGRID" id="115362">
    <property type="interactions" value="306"/>
</dbReference>
<dbReference type="ComplexPortal" id="CPX-979">
    <property type="entry name" value="Condensin I complex"/>
</dbReference>
<dbReference type="ComplexPortal" id="CPX-985">
    <property type="entry name" value="Condensin II complex"/>
</dbReference>
<dbReference type="CORUM" id="Q9NTJ3"/>
<dbReference type="DIP" id="DIP-32946N"/>
<dbReference type="FunCoup" id="Q9NTJ3">
    <property type="interactions" value="3205"/>
</dbReference>
<dbReference type="IntAct" id="Q9NTJ3">
    <property type="interactions" value="98"/>
</dbReference>
<dbReference type="MINT" id="Q9NTJ3"/>
<dbReference type="STRING" id="9606.ENSP00000341382"/>
<dbReference type="GlyConnect" id="2082">
    <property type="glycosylation" value="1 N-Linked glycan (1 site)"/>
</dbReference>
<dbReference type="GlyCosmos" id="Q9NTJ3">
    <property type="glycosylation" value="1 site, 2 glycans"/>
</dbReference>
<dbReference type="GlyGen" id="Q9NTJ3">
    <property type="glycosylation" value="3 sites, 3 N-linked glycans (2 sites), 1 O-linked glycan (1 site)"/>
</dbReference>
<dbReference type="iPTMnet" id="Q9NTJ3"/>
<dbReference type="MetOSite" id="Q9NTJ3"/>
<dbReference type="PhosphoSitePlus" id="Q9NTJ3"/>
<dbReference type="SwissPalm" id="Q9NTJ3"/>
<dbReference type="BioMuta" id="SMC4"/>
<dbReference type="DMDM" id="30173386"/>
<dbReference type="jPOST" id="Q9NTJ3"/>
<dbReference type="MassIVE" id="Q9NTJ3"/>
<dbReference type="PaxDb" id="9606-ENSP00000349961"/>
<dbReference type="PeptideAtlas" id="Q9NTJ3"/>
<dbReference type="ProteomicsDB" id="82617">
    <molecule id="Q9NTJ3-1"/>
</dbReference>
<dbReference type="ProteomicsDB" id="82618">
    <molecule id="Q9NTJ3-2"/>
</dbReference>
<dbReference type="Pumba" id="Q9NTJ3"/>
<dbReference type="Antibodypedia" id="18504">
    <property type="antibodies" value="255 antibodies from 35 providers"/>
</dbReference>
<dbReference type="DNASU" id="10051"/>
<dbReference type="Ensembl" id="ENST00000344722.5">
    <molecule id="Q9NTJ3-1"/>
    <property type="protein sequence ID" value="ENSP00000341382.5"/>
    <property type="gene ID" value="ENSG00000113810.16"/>
</dbReference>
<dbReference type="Ensembl" id="ENST00000357388.8">
    <molecule id="Q9NTJ3-1"/>
    <property type="protein sequence ID" value="ENSP00000349961.3"/>
    <property type="gene ID" value="ENSG00000113810.16"/>
</dbReference>
<dbReference type="Ensembl" id="ENST00000462787.5">
    <molecule id="Q9NTJ3-2"/>
    <property type="protein sequence ID" value="ENSP00000420734.1"/>
    <property type="gene ID" value="ENSG00000113810.16"/>
</dbReference>
<dbReference type="GeneID" id="10051"/>
<dbReference type="KEGG" id="hsa:10051"/>
<dbReference type="MANE-Select" id="ENST00000357388.8">
    <property type="protein sequence ID" value="ENSP00000349961.3"/>
    <property type="RefSeq nucleotide sequence ID" value="NM_001002800.3"/>
    <property type="RefSeq protein sequence ID" value="NP_001002800.1"/>
</dbReference>
<dbReference type="UCSC" id="uc003fdh.5">
    <molecule id="Q9NTJ3-1"/>
    <property type="organism name" value="human"/>
</dbReference>
<dbReference type="AGR" id="HGNC:14013"/>
<dbReference type="CTD" id="10051"/>
<dbReference type="DisGeNET" id="10051"/>
<dbReference type="GeneCards" id="SMC4"/>
<dbReference type="HGNC" id="HGNC:14013">
    <property type="gene designation" value="SMC4"/>
</dbReference>
<dbReference type="HPA" id="ENSG00000113810">
    <property type="expression patterns" value="Tissue enhanced (lymphoid)"/>
</dbReference>
<dbReference type="MIM" id="605575">
    <property type="type" value="gene"/>
</dbReference>
<dbReference type="neXtProt" id="NX_Q9NTJ3"/>
<dbReference type="OpenTargets" id="ENSG00000113810"/>
<dbReference type="PharmGKB" id="PA37834"/>
<dbReference type="VEuPathDB" id="HostDB:ENSG00000113810"/>
<dbReference type="eggNOG" id="KOG0996">
    <property type="taxonomic scope" value="Eukaryota"/>
</dbReference>
<dbReference type="GeneTree" id="ENSGT00900000141094"/>
<dbReference type="HOGENOM" id="CLU_001042_4_1_1"/>
<dbReference type="InParanoid" id="Q9NTJ3"/>
<dbReference type="OMA" id="CPALDNM"/>
<dbReference type="OrthoDB" id="5575062at2759"/>
<dbReference type="PAN-GO" id="Q9NTJ3">
    <property type="GO annotations" value="1 GO annotation based on evolutionary models"/>
</dbReference>
<dbReference type="PhylomeDB" id="Q9NTJ3"/>
<dbReference type="TreeFam" id="TF101158"/>
<dbReference type="PathwayCommons" id="Q9NTJ3"/>
<dbReference type="Reactome" id="R-HSA-2299718">
    <property type="pathway name" value="Condensation of Prophase Chromosomes"/>
</dbReference>
<dbReference type="Reactome" id="R-HSA-2514853">
    <property type="pathway name" value="Condensation of Prometaphase Chromosomes"/>
</dbReference>
<dbReference type="SignaLink" id="Q9NTJ3"/>
<dbReference type="SIGNOR" id="Q9NTJ3"/>
<dbReference type="BioGRID-ORCS" id="10051">
    <property type="hits" value="832 hits in 1175 CRISPR screens"/>
</dbReference>
<dbReference type="CD-CODE" id="91857CE7">
    <property type="entry name" value="Nucleolus"/>
</dbReference>
<dbReference type="CD-CODE" id="DEE660B4">
    <property type="entry name" value="Stress granule"/>
</dbReference>
<dbReference type="ChiTaRS" id="SMC4">
    <property type="organism name" value="human"/>
</dbReference>
<dbReference type="EvolutionaryTrace" id="Q9NTJ3"/>
<dbReference type="GeneWiki" id="SMC4"/>
<dbReference type="GenomeRNAi" id="10051"/>
<dbReference type="Pharos" id="Q9NTJ3">
    <property type="development level" value="Tbio"/>
</dbReference>
<dbReference type="PRO" id="PR:Q9NTJ3"/>
<dbReference type="Proteomes" id="UP000005640">
    <property type="component" value="Chromosome 3"/>
</dbReference>
<dbReference type="RNAct" id="Q9NTJ3">
    <property type="molecule type" value="protein"/>
</dbReference>
<dbReference type="Bgee" id="ENSG00000113810">
    <property type="expression patterns" value="Expressed in ventricular zone and 188 other cell types or tissues"/>
</dbReference>
<dbReference type="ExpressionAtlas" id="Q9NTJ3">
    <property type="expression patterns" value="baseline and differential"/>
</dbReference>
<dbReference type="GO" id="GO:0000775">
    <property type="term" value="C:chromosome, centromeric region"/>
    <property type="evidence" value="ECO:0007669"/>
    <property type="project" value="Ensembl"/>
</dbReference>
<dbReference type="GO" id="GO:0000794">
    <property type="term" value="C:condensed nuclear chromosome"/>
    <property type="evidence" value="ECO:0000266"/>
    <property type="project" value="ComplexPortal"/>
</dbReference>
<dbReference type="GO" id="GO:0000796">
    <property type="term" value="C:condensin complex"/>
    <property type="evidence" value="ECO:0000314"/>
    <property type="project" value="UniProtKB"/>
</dbReference>
<dbReference type="GO" id="GO:0005829">
    <property type="term" value="C:cytosol"/>
    <property type="evidence" value="ECO:0000314"/>
    <property type="project" value="HPA"/>
</dbReference>
<dbReference type="GO" id="GO:0016607">
    <property type="term" value="C:nuclear speck"/>
    <property type="evidence" value="ECO:0000314"/>
    <property type="project" value="HPA"/>
</dbReference>
<dbReference type="GO" id="GO:0005654">
    <property type="term" value="C:nucleoplasm"/>
    <property type="evidence" value="ECO:0000304"/>
    <property type="project" value="Reactome"/>
</dbReference>
<dbReference type="GO" id="GO:0005634">
    <property type="term" value="C:nucleus"/>
    <property type="evidence" value="ECO:0000304"/>
    <property type="project" value="UniProtKB"/>
</dbReference>
<dbReference type="GO" id="GO:0005524">
    <property type="term" value="F:ATP binding"/>
    <property type="evidence" value="ECO:0000304"/>
    <property type="project" value="UniProtKB"/>
</dbReference>
<dbReference type="GO" id="GO:0016887">
    <property type="term" value="F:ATP hydrolysis activity"/>
    <property type="evidence" value="ECO:0007669"/>
    <property type="project" value="InterPro"/>
</dbReference>
<dbReference type="GO" id="GO:0003682">
    <property type="term" value="F:chromatin binding"/>
    <property type="evidence" value="ECO:0007669"/>
    <property type="project" value="Ensembl"/>
</dbReference>
<dbReference type="GO" id="GO:0003697">
    <property type="term" value="F:single-stranded DNA binding"/>
    <property type="evidence" value="ECO:0007669"/>
    <property type="project" value="Ensembl"/>
</dbReference>
<dbReference type="GO" id="GO:0051301">
    <property type="term" value="P:cell division"/>
    <property type="evidence" value="ECO:0007669"/>
    <property type="project" value="UniProtKB-KW"/>
</dbReference>
<dbReference type="GO" id="GO:0051383">
    <property type="term" value="P:kinetochore organization"/>
    <property type="evidence" value="ECO:0007669"/>
    <property type="project" value="Ensembl"/>
</dbReference>
<dbReference type="GO" id="GO:0010032">
    <property type="term" value="P:meiotic chromosome condensation"/>
    <property type="evidence" value="ECO:0007669"/>
    <property type="project" value="Ensembl"/>
</dbReference>
<dbReference type="GO" id="GO:0045132">
    <property type="term" value="P:meiotic chromosome segregation"/>
    <property type="evidence" value="ECO:0007669"/>
    <property type="project" value="Ensembl"/>
</dbReference>
<dbReference type="GO" id="GO:0007076">
    <property type="term" value="P:mitotic chromosome condensation"/>
    <property type="evidence" value="ECO:0000314"/>
    <property type="project" value="UniProtKB"/>
</dbReference>
<dbReference type="GO" id="GO:0000070">
    <property type="term" value="P:mitotic sister chromatid segregation"/>
    <property type="evidence" value="ECO:0000304"/>
    <property type="project" value="UniProtKB"/>
</dbReference>
<dbReference type="GO" id="GO:1905821">
    <property type="term" value="P:positive regulation of chromosome condensation"/>
    <property type="evidence" value="ECO:0000314"/>
    <property type="project" value="ComplexPortal"/>
</dbReference>
<dbReference type="GO" id="GO:0051984">
    <property type="term" value="P:positive regulation of chromosome segregation"/>
    <property type="evidence" value="ECO:0000266"/>
    <property type="project" value="ComplexPortal"/>
</dbReference>
<dbReference type="GO" id="GO:1905820">
    <property type="term" value="P:positive regulation of chromosome separation"/>
    <property type="evidence" value="ECO:0000266"/>
    <property type="project" value="ComplexPortal"/>
</dbReference>
<dbReference type="FunFam" id="1.20.1060.20:FF:000003">
    <property type="entry name" value="Structural maintenance of chromosomes 4"/>
    <property type="match status" value="1"/>
</dbReference>
<dbReference type="FunFam" id="3.30.70.1620:FF:000003">
    <property type="entry name" value="Structural maintenance of chromosomes 4"/>
    <property type="match status" value="1"/>
</dbReference>
<dbReference type="FunFam" id="3.40.50.300:FF:000481">
    <property type="entry name" value="Structural maintenance of chromosomes 4"/>
    <property type="match status" value="1"/>
</dbReference>
<dbReference type="FunFam" id="3.40.50.300:FF:000585">
    <property type="entry name" value="Structural maintenance of chromosomes 4"/>
    <property type="match status" value="1"/>
</dbReference>
<dbReference type="Gene3D" id="1.20.1060.20">
    <property type="match status" value="1"/>
</dbReference>
<dbReference type="Gene3D" id="1.20.5.170">
    <property type="match status" value="1"/>
</dbReference>
<dbReference type="Gene3D" id="3.30.70.1620">
    <property type="match status" value="1"/>
</dbReference>
<dbReference type="Gene3D" id="3.40.50.300">
    <property type="entry name" value="P-loop containing nucleotide triphosphate hydrolases"/>
    <property type="match status" value="2"/>
</dbReference>
<dbReference type="InterPro" id="IPR027417">
    <property type="entry name" value="P-loop_NTPase"/>
</dbReference>
<dbReference type="InterPro" id="IPR003395">
    <property type="entry name" value="RecF/RecN/SMC_N"/>
</dbReference>
<dbReference type="InterPro" id="IPR024704">
    <property type="entry name" value="SMC"/>
</dbReference>
<dbReference type="InterPro" id="IPR010935">
    <property type="entry name" value="SMC_hinge"/>
</dbReference>
<dbReference type="InterPro" id="IPR036277">
    <property type="entry name" value="SMC_hinge_sf"/>
</dbReference>
<dbReference type="PANTHER" id="PTHR18937:SF172">
    <property type="entry name" value="STRUCTURAL MAINTENANCE OF CHROMOSOMES PROTEIN"/>
    <property type="match status" value="1"/>
</dbReference>
<dbReference type="PANTHER" id="PTHR18937">
    <property type="entry name" value="STRUCTURAL MAINTENANCE OF CHROMOSOMES SMC FAMILY MEMBER"/>
    <property type="match status" value="1"/>
</dbReference>
<dbReference type="Pfam" id="PF06470">
    <property type="entry name" value="SMC_hinge"/>
    <property type="match status" value="1"/>
</dbReference>
<dbReference type="Pfam" id="PF02463">
    <property type="entry name" value="SMC_N"/>
    <property type="match status" value="1"/>
</dbReference>
<dbReference type="PIRSF" id="PIRSF005719">
    <property type="entry name" value="SMC"/>
    <property type="match status" value="1"/>
</dbReference>
<dbReference type="SMART" id="SM00968">
    <property type="entry name" value="SMC_hinge"/>
    <property type="match status" value="1"/>
</dbReference>
<dbReference type="SUPFAM" id="SSF52540">
    <property type="entry name" value="P-loop containing nucleoside triphosphate hydrolases"/>
    <property type="match status" value="1"/>
</dbReference>
<dbReference type="SUPFAM" id="SSF75553">
    <property type="entry name" value="Smc hinge domain"/>
    <property type="match status" value="1"/>
</dbReference>
<dbReference type="SUPFAM" id="SSF57997">
    <property type="entry name" value="Tropomyosin"/>
    <property type="match status" value="2"/>
</dbReference>
<evidence type="ECO:0000250" key="1"/>
<evidence type="ECO:0000250" key="2">
    <source>
        <dbReference type="UniProtKB" id="Q8CG47"/>
    </source>
</evidence>
<evidence type="ECO:0000255" key="3"/>
<evidence type="ECO:0000256" key="4">
    <source>
        <dbReference type="SAM" id="MobiDB-lite"/>
    </source>
</evidence>
<evidence type="ECO:0000269" key="5">
    <source>
    </source>
</evidence>
<evidence type="ECO:0000269" key="6">
    <source>
    </source>
</evidence>
<evidence type="ECO:0000269" key="7">
    <source>
    </source>
</evidence>
<evidence type="ECO:0000303" key="8">
    <source>
    </source>
</evidence>
<evidence type="ECO:0000305" key="9"/>
<evidence type="ECO:0007744" key="10">
    <source>
    </source>
</evidence>
<evidence type="ECO:0007744" key="11">
    <source>
    </source>
</evidence>
<evidence type="ECO:0007744" key="12">
    <source>
    </source>
</evidence>
<evidence type="ECO:0007744" key="13">
    <source>
    </source>
</evidence>
<evidence type="ECO:0007744" key="14">
    <source>
    </source>
</evidence>
<evidence type="ECO:0007829" key="15">
    <source>
        <dbReference type="PDB" id="4U4P"/>
    </source>
</evidence>
<comment type="function">
    <text evidence="7">Central component of the condensin complex, a complex required for conversion of interphase chromatin into mitotic-like condense chromosomes. The condensin complex probably introduces positive supercoils into relaxed DNA in the presence of type I topoisomerases and converts nicked DNA into positive knotted forms in the presence of type II topoisomerases.</text>
</comment>
<comment type="subunit">
    <text evidence="6 7">Forms a heterodimer with SMC2. Component of the condensin complex, which contains the SMC2 and SMC4 heterodimer, and three non SMC subunits that probably regulate the complex: BRRN1/CAPH, CNAP1/CAPD2 and CAPG.</text>
</comment>
<comment type="interaction">
    <interactant intactId="EBI-356173">
        <id>Q9NTJ3</id>
    </interactant>
    <interactant intactId="EBI-1046410">
        <id>Q15003</id>
        <label>NCAPH</label>
    </interactant>
    <organismsDiffer>false</organismsDiffer>
    <experiments>4</experiments>
</comment>
<comment type="interaction">
    <interactant intactId="EBI-356173">
        <id>Q9NTJ3</id>
    </interactant>
    <interactant intactId="EBI-2548296">
        <id>Q6IBW4</id>
        <label>NCAPH2</label>
    </interactant>
    <organismsDiffer>false</organismsDiffer>
    <experiments>5</experiments>
</comment>
<comment type="interaction">
    <interactant intactId="EBI-356173">
        <id>Q9NTJ3</id>
    </interactant>
    <interactant intactId="EBI-355822">
        <id>O95347</id>
        <label>SMC2</label>
    </interactant>
    <organismsDiffer>false</organismsDiffer>
    <experiments>3</experiments>
</comment>
<comment type="subcellular location">
    <subcellularLocation>
        <location evidence="6">Nucleus</location>
    </subcellularLocation>
    <subcellularLocation>
        <location evidence="6">Cytoplasm</location>
    </subcellularLocation>
    <subcellularLocation>
        <location evidence="6">Chromosome</location>
    </subcellularLocation>
    <text>In interphase cells, the majority of the condensin complex is found in the cytoplasm, while a minority of the complex is associated with chromatin. A subpopulation of the complex however remains associated with chromosome foci in interphase cells. During mitosis, most of the condensin complex is associated with the chromatin. At the onset of prophase, the regulatory subunits of the complex are phosphorylated by CDC2, leading to condensin's association with chromosome arms and to chromosome condensation. Dissociation from chromosomes is observed in late telophase.</text>
</comment>
<comment type="alternative products">
    <event type="alternative splicing"/>
    <isoform>
        <id>Q9NTJ3-1</id>
        <name>1</name>
        <sequence type="displayed"/>
    </isoform>
    <isoform>
        <id>Q9NTJ3-2</id>
        <name>2</name>
        <sequence type="described" ref="VSP_007245"/>
    </isoform>
</comment>
<comment type="tissue specificity">
    <text evidence="5">Widely expressed. Higher expression in testis, colon, thymus.</text>
</comment>
<comment type="domain">
    <text evidence="1">The SMC hinge domain, which separates the large intramolecular coiled coil regions, allows the heterodimerization with SMC2, forming a V-shaped heterodimer.</text>
</comment>
<comment type="similarity">
    <text evidence="9">Belongs to the SMC family. SMC4 subfamily.</text>
</comment>
<accession>Q9NTJ3</accession>
<accession>A6NLT9</accession>
<accession>D3DNL8</accession>
<accession>O95752</accession>
<accession>Q8NDL4</accession>
<accession>Q9UNT9</accession>